<geneLocation type="chloroplast"/>
<feature type="initiator methionine" description="Removed" evidence="1">
    <location>
        <position position="1"/>
    </location>
</feature>
<feature type="chain" id="PRO_0000359673" description="Photosystem II D2 protein">
    <location>
        <begin position="2"/>
        <end position="353"/>
    </location>
</feature>
<feature type="transmembrane region" description="Helical" evidence="2">
    <location>
        <begin position="41"/>
        <end position="61"/>
    </location>
</feature>
<feature type="transmembrane region" description="Helical" evidence="2">
    <location>
        <begin position="125"/>
        <end position="141"/>
    </location>
</feature>
<feature type="transmembrane region" description="Helical" evidence="2">
    <location>
        <begin position="153"/>
        <end position="166"/>
    </location>
</feature>
<feature type="transmembrane region" description="Helical" evidence="2">
    <location>
        <begin position="208"/>
        <end position="228"/>
    </location>
</feature>
<feature type="transmembrane region" description="Helical" evidence="2">
    <location>
        <begin position="279"/>
        <end position="295"/>
    </location>
</feature>
<feature type="binding site" description="axial binding residue" evidence="2">
    <location>
        <position position="118"/>
    </location>
    <ligand>
        <name>chlorophyll a</name>
        <dbReference type="ChEBI" id="CHEBI:58416"/>
        <label>ChlzD2</label>
    </ligand>
    <ligandPart>
        <name>Mg</name>
        <dbReference type="ChEBI" id="CHEBI:25107"/>
    </ligandPart>
</feature>
<feature type="binding site" evidence="2">
    <location>
        <position position="130"/>
    </location>
    <ligand>
        <name>pheophytin a</name>
        <dbReference type="ChEBI" id="CHEBI:136840"/>
        <label>D2</label>
    </ligand>
</feature>
<feature type="binding site" evidence="2">
    <location>
        <position position="143"/>
    </location>
    <ligand>
        <name>pheophytin a</name>
        <dbReference type="ChEBI" id="CHEBI:136840"/>
        <label>D2</label>
    </ligand>
</feature>
<feature type="binding site" description="axial binding residue" evidence="2">
    <location>
        <position position="198"/>
    </location>
    <ligand>
        <name>chlorophyll a</name>
        <dbReference type="ChEBI" id="CHEBI:58416"/>
        <label>PD2</label>
    </ligand>
    <ligandPart>
        <name>Mg</name>
        <dbReference type="ChEBI" id="CHEBI:25107"/>
    </ligandPart>
</feature>
<feature type="binding site" evidence="2">
    <location>
        <position position="215"/>
    </location>
    <ligand>
        <name>a plastoquinone</name>
        <dbReference type="ChEBI" id="CHEBI:17757"/>
        <label>Q(A)</label>
    </ligand>
</feature>
<feature type="binding site" evidence="2">
    <location>
        <position position="215"/>
    </location>
    <ligand>
        <name>Fe cation</name>
        <dbReference type="ChEBI" id="CHEBI:24875"/>
        <note>ligand shared with heterodimeric partner</note>
    </ligand>
</feature>
<feature type="binding site" evidence="2">
    <location>
        <position position="262"/>
    </location>
    <ligand>
        <name>a plastoquinone</name>
        <dbReference type="ChEBI" id="CHEBI:17757"/>
        <label>Q(A)</label>
    </ligand>
</feature>
<feature type="binding site" evidence="2">
    <location>
        <position position="269"/>
    </location>
    <ligand>
        <name>Fe cation</name>
        <dbReference type="ChEBI" id="CHEBI:24875"/>
        <note>ligand shared with heterodimeric partner</note>
    </ligand>
</feature>
<feature type="modified residue" description="N-acetylthreonine" evidence="1">
    <location>
        <position position="2"/>
    </location>
</feature>
<feature type="modified residue" description="Phosphothreonine" evidence="1">
    <location>
        <position position="2"/>
    </location>
</feature>
<dbReference type="EC" id="1.10.3.9" evidence="2"/>
<dbReference type="EMBL" id="DQ069639">
    <property type="protein sequence ID" value="AAZ04071.1"/>
    <property type="molecule type" value="Genomic_DNA"/>
</dbReference>
<dbReference type="EMBL" id="DQ354691">
    <property type="protein sequence ID" value="ABC60453.1"/>
    <property type="molecule type" value="Genomic_DNA"/>
</dbReference>
<dbReference type="RefSeq" id="YP_001001529.1">
    <property type="nucleotide sequence ID" value="NC_008788.1"/>
</dbReference>
<dbReference type="SMR" id="Q4FFP2"/>
<dbReference type="GeneID" id="4699580"/>
<dbReference type="GO" id="GO:0009535">
    <property type="term" value="C:chloroplast thylakoid membrane"/>
    <property type="evidence" value="ECO:0007669"/>
    <property type="project" value="UniProtKB-SubCell"/>
</dbReference>
<dbReference type="GO" id="GO:0009523">
    <property type="term" value="C:photosystem II"/>
    <property type="evidence" value="ECO:0007669"/>
    <property type="project" value="UniProtKB-KW"/>
</dbReference>
<dbReference type="GO" id="GO:0016168">
    <property type="term" value="F:chlorophyll binding"/>
    <property type="evidence" value="ECO:0007669"/>
    <property type="project" value="UniProtKB-UniRule"/>
</dbReference>
<dbReference type="GO" id="GO:0045156">
    <property type="term" value="F:electron transporter, transferring electrons within the cyclic electron transport pathway of photosynthesis activity"/>
    <property type="evidence" value="ECO:0007669"/>
    <property type="project" value="InterPro"/>
</dbReference>
<dbReference type="GO" id="GO:0005506">
    <property type="term" value="F:iron ion binding"/>
    <property type="evidence" value="ECO:0007669"/>
    <property type="project" value="UniProtKB-UniRule"/>
</dbReference>
<dbReference type="GO" id="GO:0010242">
    <property type="term" value="F:oxygen evolving activity"/>
    <property type="evidence" value="ECO:0007669"/>
    <property type="project" value="UniProtKB-EC"/>
</dbReference>
<dbReference type="GO" id="GO:0009772">
    <property type="term" value="P:photosynthetic electron transport in photosystem II"/>
    <property type="evidence" value="ECO:0007669"/>
    <property type="project" value="InterPro"/>
</dbReference>
<dbReference type="CDD" id="cd09288">
    <property type="entry name" value="Photosystem-II_D2"/>
    <property type="match status" value="1"/>
</dbReference>
<dbReference type="FunFam" id="1.20.85.10:FF:000001">
    <property type="entry name" value="photosystem II D2 protein-like"/>
    <property type="match status" value="1"/>
</dbReference>
<dbReference type="Gene3D" id="1.20.85.10">
    <property type="entry name" value="Photosystem II protein D1-like"/>
    <property type="match status" value="1"/>
</dbReference>
<dbReference type="HAMAP" id="MF_01383">
    <property type="entry name" value="PSII_PsbD_D2"/>
    <property type="match status" value="1"/>
</dbReference>
<dbReference type="InterPro" id="IPR055266">
    <property type="entry name" value="D1/D2"/>
</dbReference>
<dbReference type="InterPro" id="IPR036854">
    <property type="entry name" value="Photo_II_D1/D2_sf"/>
</dbReference>
<dbReference type="InterPro" id="IPR000484">
    <property type="entry name" value="Photo_RC_L/M"/>
</dbReference>
<dbReference type="InterPro" id="IPR055265">
    <property type="entry name" value="Photo_RC_L/M_CS"/>
</dbReference>
<dbReference type="InterPro" id="IPR005868">
    <property type="entry name" value="PSII_PsbD/D2"/>
</dbReference>
<dbReference type="NCBIfam" id="TIGR01152">
    <property type="entry name" value="psbD"/>
    <property type="match status" value="1"/>
</dbReference>
<dbReference type="PANTHER" id="PTHR33149:SF12">
    <property type="entry name" value="PHOTOSYSTEM II D2 PROTEIN"/>
    <property type="match status" value="1"/>
</dbReference>
<dbReference type="PANTHER" id="PTHR33149">
    <property type="entry name" value="PHOTOSYSTEM II PROTEIN D1"/>
    <property type="match status" value="1"/>
</dbReference>
<dbReference type="Pfam" id="PF00124">
    <property type="entry name" value="Photo_RC"/>
    <property type="match status" value="1"/>
</dbReference>
<dbReference type="PRINTS" id="PR00256">
    <property type="entry name" value="REACTNCENTRE"/>
</dbReference>
<dbReference type="SUPFAM" id="SSF81483">
    <property type="entry name" value="Bacterial photosystem II reaction centre, L and M subunits"/>
    <property type="match status" value="1"/>
</dbReference>
<dbReference type="PROSITE" id="PS00244">
    <property type="entry name" value="REACTION_CENTER"/>
    <property type="match status" value="1"/>
</dbReference>
<evidence type="ECO:0000250" key="1">
    <source>
        <dbReference type="UniProtKB" id="P56761"/>
    </source>
</evidence>
<evidence type="ECO:0000255" key="2">
    <source>
        <dbReference type="HAMAP-Rule" id="MF_01383"/>
    </source>
</evidence>
<reference key="1">
    <citation type="journal article" date="2005" name="Mol. Biol. Evol.">
        <title>Identifying the basal angiosperm node in chloroplast genome phylogenies: sampling one's way out of the Felsenstein zone.</title>
        <authorList>
            <person name="Leebens-Mack J."/>
            <person name="Raubeson L.A."/>
            <person name="Cui L."/>
            <person name="Kuehl J.V."/>
            <person name="Fourcade M.H."/>
            <person name="Chumley T.W."/>
            <person name="Boore J.L."/>
            <person name="Jansen R.K."/>
            <person name="dePamphilis C.W."/>
        </authorList>
    </citation>
    <scope>NUCLEOTIDE SEQUENCE [GENOMIC DNA]</scope>
</reference>
<reference key="2">
    <citation type="journal article" date="2007" name="BMC Genomics">
        <title>Comparative chloroplast genomics: analyses including new sequences from the angiosperms Nuphar advena and Ranunculus macranthus.</title>
        <authorList>
            <person name="Raubeson L.A."/>
            <person name="Peery R."/>
            <person name="Chumley T.W."/>
            <person name="Dziubek C."/>
            <person name="Fourcade H.M."/>
            <person name="Boore J.L."/>
            <person name="Jansen R.K."/>
        </authorList>
    </citation>
    <scope>NUCLEOTIDE SEQUENCE [LARGE SCALE GENOMIC DNA]</scope>
</reference>
<accession>Q4FFP2</accession>
<proteinExistence type="inferred from homology"/>
<sequence>MTIALGRFTKEENDLFDIMDDWLRRDRFVFVGWSGLLLFPCAYFALGGWFTGTTFVTSWYTHGLASSYLEGCNFLTAAVSTPANSLAHSLLLLWGPEAQGDFTRWCQLGGLWTFVALHGAFGLIGFMLRQFELARSVQLRPYNAIAFSAPIAVFVSVFLIYPLGQSGWFFAPSFGVAAIFRFILFFQGFHNWTLNPFHMMGVAGVLGAALLCAIHGATVENTLFEDGDGANTFRAFNPTQAEETYSMVTANRFWSQIFGVAFSNKRWLHFFMLFVPVTGLWMSALGVVGLALNLRAYDFVSQEIRAAEDPEFETFYTKNILLNEGIRAWMAAQDQPHENLIFPEEVLPRGNAL</sequence>
<protein>
    <recommendedName>
        <fullName evidence="2">Photosystem II D2 protein</fullName>
        <shortName evidence="2">PSII D2 protein</shortName>
        <ecNumber evidence="2">1.10.3.9</ecNumber>
    </recommendedName>
    <alternativeName>
        <fullName evidence="2">Photosystem Q(A) protein</fullName>
    </alternativeName>
</protein>
<keyword id="KW-0007">Acetylation</keyword>
<keyword id="KW-0148">Chlorophyll</keyword>
<keyword id="KW-0150">Chloroplast</keyword>
<keyword id="KW-0157">Chromophore</keyword>
<keyword id="KW-0249">Electron transport</keyword>
<keyword id="KW-0408">Iron</keyword>
<keyword id="KW-0460">Magnesium</keyword>
<keyword id="KW-0472">Membrane</keyword>
<keyword id="KW-0479">Metal-binding</keyword>
<keyword id="KW-0560">Oxidoreductase</keyword>
<keyword id="KW-0597">Phosphoprotein</keyword>
<keyword id="KW-0602">Photosynthesis</keyword>
<keyword id="KW-0604">Photosystem II</keyword>
<keyword id="KW-0934">Plastid</keyword>
<keyword id="KW-0793">Thylakoid</keyword>
<keyword id="KW-0812">Transmembrane</keyword>
<keyword id="KW-1133">Transmembrane helix</keyword>
<keyword id="KW-0813">Transport</keyword>
<gene>
    <name evidence="2" type="primary">psbD</name>
</gene>
<organism>
    <name type="scientific">Nuphar advena</name>
    <name type="common">Common spatterdock</name>
    <name type="synonym">Nuphar lutea subsp. advena</name>
    <dbReference type="NCBI Taxonomy" id="77108"/>
    <lineage>
        <taxon>Eukaryota</taxon>
        <taxon>Viridiplantae</taxon>
        <taxon>Streptophyta</taxon>
        <taxon>Embryophyta</taxon>
        <taxon>Tracheophyta</taxon>
        <taxon>Spermatophyta</taxon>
        <taxon>Magnoliopsida</taxon>
        <taxon>Nymphaeales</taxon>
        <taxon>Nymphaeaceae</taxon>
        <taxon>Nuphar</taxon>
    </lineage>
</organism>
<comment type="function">
    <text evidence="2">Photosystem II (PSII) is a light-driven water:plastoquinone oxidoreductase that uses light energy to abstract electrons from H(2)O, generating O(2) and a proton gradient subsequently used for ATP formation. It consists of a core antenna complex that captures photons, and an electron transfer chain that converts photonic excitation into a charge separation. The D1/D2 (PsbA/PsbD) reaction center heterodimer binds P680, the primary electron donor of PSII as well as several subsequent electron acceptors. D2 is needed for assembly of a stable PSII complex.</text>
</comment>
<comment type="catalytic activity">
    <reaction evidence="2">
        <text>2 a plastoquinone + 4 hnu + 2 H2O = 2 a plastoquinol + O2</text>
        <dbReference type="Rhea" id="RHEA:36359"/>
        <dbReference type="Rhea" id="RHEA-COMP:9561"/>
        <dbReference type="Rhea" id="RHEA-COMP:9562"/>
        <dbReference type="ChEBI" id="CHEBI:15377"/>
        <dbReference type="ChEBI" id="CHEBI:15379"/>
        <dbReference type="ChEBI" id="CHEBI:17757"/>
        <dbReference type="ChEBI" id="CHEBI:30212"/>
        <dbReference type="ChEBI" id="CHEBI:62192"/>
        <dbReference type="EC" id="1.10.3.9"/>
    </reaction>
</comment>
<comment type="cofactor">
    <text evidence="2">The D1/D2 heterodimer binds P680, chlorophylls that are the primary electron donor of PSII, and subsequent electron acceptors. It shares a non-heme iron and each subunit binds pheophytin, quinone, additional chlorophylls, carotenoids and lipids. There is also a Cl(-1) ion associated with D1 and D2, which is required for oxygen evolution. The PSII complex binds additional chlorophylls, carotenoids and specific lipids.</text>
</comment>
<comment type="subunit">
    <text evidence="2">PSII is composed of 1 copy each of membrane proteins PsbA, PsbB, PsbC, PsbD, PsbE, PsbF, PsbH, PsbI, PsbJ, PsbK, PsbL, PsbM, PsbT, PsbX, PsbY, PsbZ, Psb30/Ycf12, at least 3 peripheral proteins of the oxygen-evolving complex and a large number of cofactors. It forms dimeric complexes.</text>
</comment>
<comment type="subcellular location">
    <subcellularLocation>
        <location evidence="2">Plastid</location>
        <location evidence="2">Chloroplast thylakoid membrane</location>
        <topology evidence="2">Multi-pass membrane protein</topology>
    </subcellularLocation>
</comment>
<comment type="miscellaneous">
    <text evidence="2">2 of the reaction center chlorophylls (ChlD1 and ChlD2) are entirely coordinated by water.</text>
</comment>
<comment type="similarity">
    <text evidence="2">Belongs to the reaction center PufL/M/PsbA/D family.</text>
</comment>
<name>PSBD_NUPAD</name>